<evidence type="ECO:0000250" key="1"/>
<evidence type="ECO:0000250" key="2">
    <source>
        <dbReference type="UniProtKB" id="Q5NDM2"/>
    </source>
</evidence>
<evidence type="ECO:0000255" key="3">
    <source>
        <dbReference type="PROSITE-ProRule" id="PRU00089"/>
    </source>
</evidence>
<evidence type="ECO:0000256" key="4">
    <source>
        <dbReference type="SAM" id="MobiDB-lite"/>
    </source>
</evidence>
<evidence type="ECO:0000305" key="5"/>
<evidence type="ECO:0000312" key="6">
    <source>
        <dbReference type="EMBL" id="CAJ83471.1"/>
    </source>
</evidence>
<feature type="chain" id="PRO_0000247730" description="Forkhead box protein I2">
    <location>
        <begin position="1"/>
        <end position="368"/>
    </location>
</feature>
<feature type="DNA-binding region" description="Fork-head" evidence="3">
    <location>
        <begin position="124"/>
        <end position="218"/>
    </location>
</feature>
<feature type="region of interest" description="Disordered" evidence="4">
    <location>
        <begin position="33"/>
        <end position="54"/>
    </location>
</feature>
<feature type="region of interest" description="Disordered" evidence="4">
    <location>
        <begin position="243"/>
        <end position="272"/>
    </location>
</feature>
<feature type="compositionally biased region" description="Polar residues" evidence="4">
    <location>
        <begin position="255"/>
        <end position="264"/>
    </location>
</feature>
<proteinExistence type="evidence at transcript level"/>
<reference evidence="6" key="1">
    <citation type="submission" date="2006-03" db="EMBL/GenBank/DDBJ databases">
        <authorList>
            <consortium name="Sanger Xenopus tropicalis EST/cDNA project"/>
        </authorList>
    </citation>
    <scope>NUCLEOTIDE SEQUENCE [LARGE SCALE MRNA]</scope>
    <source>
        <tissue>Gastrula</tissue>
    </source>
</reference>
<comment type="function">
    <text evidence="1">Possible transcriptional activator.</text>
</comment>
<comment type="subcellular location">
    <subcellularLocation>
        <location evidence="5">Nucleus</location>
    </subcellularLocation>
</comment>
<gene>
    <name evidence="2" type="primary">foxi2</name>
    <name type="ORF">TGas144f13.1</name>
</gene>
<accession>Q28HT3</accession>
<organism>
    <name type="scientific">Xenopus tropicalis</name>
    <name type="common">Western clawed frog</name>
    <name type="synonym">Silurana tropicalis</name>
    <dbReference type="NCBI Taxonomy" id="8364"/>
    <lineage>
        <taxon>Eukaryota</taxon>
        <taxon>Metazoa</taxon>
        <taxon>Chordata</taxon>
        <taxon>Craniata</taxon>
        <taxon>Vertebrata</taxon>
        <taxon>Euteleostomi</taxon>
        <taxon>Amphibia</taxon>
        <taxon>Batrachia</taxon>
        <taxon>Anura</taxon>
        <taxon>Pipoidea</taxon>
        <taxon>Pipidae</taxon>
        <taxon>Xenopodinae</taxon>
        <taxon>Xenopus</taxon>
        <taxon>Silurana</taxon>
    </lineage>
</organism>
<sequence length="368" mass="40439">MNTFGQQPTNPHAQDLLDMAMYCDHFSLYHQQQNQQLPQRPAAPPALGYGRNEYSSPTASPYPWLNGPAMNSSPYLNGGSGSPYFPAGYGGGQRQFIPPSSGFGVADFPWLSIPNQADLLKMVRPPYSYSSLIAMAIQNNPEKKLTLSQIYSYVAENFPFYKKSKAGWQNSIRHNLSLNDCFKKVARDDNDPGKGNYWTLDPNCEKMFDNGNFRRKRKRKSESVEAGFDGDASEDKKELALKSLGSDSPRGASALEQSSYGTPESKSRPAGGLAALDSSHCFTNFASNMNALMNVGAPRHFSARLGDFSNSRHYLAELASCPISSPQISEPQTGSKVPCYPSKQASSLCTSVMNSFSLNHLYSREGEV</sequence>
<dbReference type="EMBL" id="CR760754">
    <property type="protein sequence ID" value="CAJ83471.1"/>
    <property type="molecule type" value="mRNA"/>
</dbReference>
<dbReference type="RefSeq" id="NP_001016544.1">
    <property type="nucleotide sequence ID" value="NM_001016544.2"/>
</dbReference>
<dbReference type="SMR" id="Q28HT3"/>
<dbReference type="STRING" id="8364.ENSXETP00000048326"/>
<dbReference type="PaxDb" id="8364-ENSXETP00000011342"/>
<dbReference type="GeneID" id="549298"/>
<dbReference type="KEGG" id="xtr:549298"/>
<dbReference type="AGR" id="Xenbase:XB-GENE-982122"/>
<dbReference type="CTD" id="399823"/>
<dbReference type="Xenbase" id="XB-GENE-982122">
    <property type="gene designation" value="foxi2"/>
</dbReference>
<dbReference type="eggNOG" id="KOG2294">
    <property type="taxonomic scope" value="Eukaryota"/>
</dbReference>
<dbReference type="InParanoid" id="Q28HT3"/>
<dbReference type="OrthoDB" id="5402974at2759"/>
<dbReference type="Proteomes" id="UP000008143">
    <property type="component" value="Chromosome 7"/>
</dbReference>
<dbReference type="GO" id="GO:0005634">
    <property type="term" value="C:nucleus"/>
    <property type="evidence" value="ECO:0000250"/>
    <property type="project" value="UniProtKB"/>
</dbReference>
<dbReference type="GO" id="GO:0003700">
    <property type="term" value="F:DNA-binding transcription factor activity"/>
    <property type="evidence" value="ECO:0007669"/>
    <property type="project" value="InterPro"/>
</dbReference>
<dbReference type="GO" id="GO:0043565">
    <property type="term" value="F:sequence-specific DNA binding"/>
    <property type="evidence" value="ECO:0007669"/>
    <property type="project" value="InterPro"/>
</dbReference>
<dbReference type="FunFam" id="1.10.10.10:FF:000016">
    <property type="entry name" value="Forkhead box protein I1"/>
    <property type="match status" value="1"/>
</dbReference>
<dbReference type="Gene3D" id="1.10.10.10">
    <property type="entry name" value="Winged helix-like DNA-binding domain superfamily/Winged helix DNA-binding domain"/>
    <property type="match status" value="1"/>
</dbReference>
<dbReference type="InterPro" id="IPR001766">
    <property type="entry name" value="Fork_head_dom"/>
</dbReference>
<dbReference type="InterPro" id="IPR050211">
    <property type="entry name" value="FOX_domain-containing"/>
</dbReference>
<dbReference type="InterPro" id="IPR018122">
    <property type="entry name" value="TF_fork_head_CS_1"/>
</dbReference>
<dbReference type="InterPro" id="IPR030456">
    <property type="entry name" value="TF_fork_head_CS_2"/>
</dbReference>
<dbReference type="InterPro" id="IPR036388">
    <property type="entry name" value="WH-like_DNA-bd_sf"/>
</dbReference>
<dbReference type="InterPro" id="IPR036390">
    <property type="entry name" value="WH_DNA-bd_sf"/>
</dbReference>
<dbReference type="PANTHER" id="PTHR11829">
    <property type="entry name" value="FORKHEAD BOX PROTEIN"/>
    <property type="match status" value="1"/>
</dbReference>
<dbReference type="PANTHER" id="PTHR11829:SF397">
    <property type="entry name" value="FORKHEAD BOX PROTEIN I2"/>
    <property type="match status" value="1"/>
</dbReference>
<dbReference type="Pfam" id="PF00250">
    <property type="entry name" value="Forkhead"/>
    <property type="match status" value="1"/>
</dbReference>
<dbReference type="PRINTS" id="PR00053">
    <property type="entry name" value="FORKHEAD"/>
</dbReference>
<dbReference type="SMART" id="SM00339">
    <property type="entry name" value="FH"/>
    <property type="match status" value="1"/>
</dbReference>
<dbReference type="SUPFAM" id="SSF46785">
    <property type="entry name" value="Winged helix' DNA-binding domain"/>
    <property type="match status" value="1"/>
</dbReference>
<dbReference type="PROSITE" id="PS00657">
    <property type="entry name" value="FORK_HEAD_1"/>
    <property type="match status" value="1"/>
</dbReference>
<dbReference type="PROSITE" id="PS00658">
    <property type="entry name" value="FORK_HEAD_2"/>
    <property type="match status" value="1"/>
</dbReference>
<dbReference type="PROSITE" id="PS50039">
    <property type="entry name" value="FORK_HEAD_3"/>
    <property type="match status" value="1"/>
</dbReference>
<protein>
    <recommendedName>
        <fullName>Forkhead box protein I2</fullName>
    </recommendedName>
</protein>
<keyword id="KW-0010">Activator</keyword>
<keyword id="KW-0238">DNA-binding</keyword>
<keyword id="KW-0539">Nucleus</keyword>
<keyword id="KW-1185">Reference proteome</keyword>
<keyword id="KW-0804">Transcription</keyword>
<keyword id="KW-0805">Transcription regulation</keyword>
<name>FOXI2_XENTR</name>